<proteinExistence type="inferred from homology"/>
<feature type="chain" id="PRO_0000239795" description="Bifunctional pantoate ligase/cytidylate kinase">
    <location>
        <begin position="1"/>
        <end position="540"/>
    </location>
</feature>
<feature type="region of interest" description="Pantoate--beta-alanine ligase" evidence="1">
    <location>
        <begin position="1"/>
        <end position="280"/>
    </location>
</feature>
<feature type="region of interest" description="Cytidylate kinase" evidence="1">
    <location>
        <begin position="281"/>
        <end position="540"/>
    </location>
</feature>
<feature type="region of interest" description="Disordered" evidence="2">
    <location>
        <begin position="288"/>
        <end position="307"/>
    </location>
</feature>
<feature type="active site" description="Proton donor" evidence="1">
    <location>
        <position position="35"/>
    </location>
</feature>
<feature type="binding site" evidence="1">
    <location>
        <begin position="28"/>
        <end position="35"/>
    </location>
    <ligand>
        <name>ATP</name>
        <dbReference type="ChEBI" id="CHEBI:30616"/>
    </ligand>
</feature>
<feature type="binding site" evidence="1">
    <location>
        <position position="59"/>
    </location>
    <ligand>
        <name>(R)-pantoate</name>
        <dbReference type="ChEBI" id="CHEBI:15980"/>
    </ligand>
</feature>
<feature type="binding site" evidence="1">
    <location>
        <position position="59"/>
    </location>
    <ligand>
        <name>beta-alanine</name>
        <dbReference type="ChEBI" id="CHEBI:57966"/>
    </ligand>
</feature>
<feature type="binding site" evidence="1">
    <location>
        <begin position="150"/>
        <end position="153"/>
    </location>
    <ligand>
        <name>ATP</name>
        <dbReference type="ChEBI" id="CHEBI:30616"/>
    </ligand>
</feature>
<feature type="binding site" evidence="1">
    <location>
        <position position="156"/>
    </location>
    <ligand>
        <name>(R)-pantoate</name>
        <dbReference type="ChEBI" id="CHEBI:15980"/>
    </ligand>
</feature>
<feature type="binding site" evidence="1">
    <location>
        <position position="179"/>
    </location>
    <ligand>
        <name>ATP</name>
        <dbReference type="ChEBI" id="CHEBI:30616"/>
    </ligand>
</feature>
<feature type="binding site" evidence="1">
    <location>
        <begin position="187"/>
        <end position="190"/>
    </location>
    <ligand>
        <name>ATP</name>
        <dbReference type="ChEBI" id="CHEBI:30616"/>
    </ligand>
</feature>
<gene>
    <name evidence="1" type="primary">panC/cmk</name>
    <name type="ordered locus">CYA_2663</name>
</gene>
<protein>
    <recommendedName>
        <fullName evidence="1">Bifunctional pantoate ligase/cytidylate kinase</fullName>
    </recommendedName>
    <domain>
        <recommendedName>
            <fullName evidence="1">Pantothenate synthetase</fullName>
            <shortName evidence="1">PS</shortName>
            <ecNumber evidence="1">6.3.2.1</ecNumber>
        </recommendedName>
        <alternativeName>
            <fullName evidence="1">Pantoate--beta-alanine ligase</fullName>
        </alternativeName>
        <alternativeName>
            <fullName evidence="1">Pantoate-activating enzyme</fullName>
        </alternativeName>
    </domain>
    <domain>
        <recommendedName>
            <fullName evidence="1">Cytidylate kinase</fullName>
            <shortName evidence="1">CK</shortName>
            <ecNumber evidence="1">2.7.4.25</ecNumber>
        </recommendedName>
        <alternativeName>
            <fullName evidence="1">Cytidine monophosphate kinase</fullName>
            <shortName evidence="1">CMP kinase</shortName>
        </alternativeName>
    </domain>
</protein>
<evidence type="ECO:0000255" key="1">
    <source>
        <dbReference type="HAMAP-Rule" id="MF_01349"/>
    </source>
</evidence>
<evidence type="ECO:0000256" key="2">
    <source>
        <dbReference type="SAM" id="MobiDB-lite"/>
    </source>
</evidence>
<organism>
    <name type="scientific">Synechococcus sp. (strain JA-3-3Ab)</name>
    <name type="common">Cyanobacteria bacterium Yellowstone A-Prime</name>
    <dbReference type="NCBI Taxonomy" id="321327"/>
    <lineage>
        <taxon>Bacteria</taxon>
        <taxon>Bacillati</taxon>
        <taxon>Cyanobacteriota</taxon>
        <taxon>Cyanophyceae</taxon>
        <taxon>Synechococcales</taxon>
        <taxon>Synechococcaceae</taxon>
        <taxon>Synechococcus</taxon>
    </lineage>
</organism>
<accession>Q2JRH9</accession>
<name>PANCY_SYNJA</name>
<comment type="function">
    <text evidence="1">Catalyzes the condensation of pantoate with beta-alanine in an ATP-dependent reaction via a pantoyl-adenylate intermediate.</text>
</comment>
<comment type="function">
    <text evidence="1">Catalyzes the transfer of a phosphate group from ATP to either CMP or dCMP to form CDP or dCDP and ADP, respectively.</text>
</comment>
<comment type="catalytic activity">
    <reaction evidence="1">
        <text>(R)-pantoate + beta-alanine + ATP = (R)-pantothenate + AMP + diphosphate + H(+)</text>
        <dbReference type="Rhea" id="RHEA:10912"/>
        <dbReference type="ChEBI" id="CHEBI:15378"/>
        <dbReference type="ChEBI" id="CHEBI:15980"/>
        <dbReference type="ChEBI" id="CHEBI:29032"/>
        <dbReference type="ChEBI" id="CHEBI:30616"/>
        <dbReference type="ChEBI" id="CHEBI:33019"/>
        <dbReference type="ChEBI" id="CHEBI:57966"/>
        <dbReference type="ChEBI" id="CHEBI:456215"/>
        <dbReference type="EC" id="6.3.2.1"/>
    </reaction>
</comment>
<comment type="catalytic activity">
    <reaction evidence="1">
        <text>CMP + ATP = CDP + ADP</text>
        <dbReference type="Rhea" id="RHEA:11600"/>
        <dbReference type="ChEBI" id="CHEBI:30616"/>
        <dbReference type="ChEBI" id="CHEBI:58069"/>
        <dbReference type="ChEBI" id="CHEBI:60377"/>
        <dbReference type="ChEBI" id="CHEBI:456216"/>
        <dbReference type="EC" id="2.7.4.25"/>
    </reaction>
</comment>
<comment type="catalytic activity">
    <reaction evidence="1">
        <text>dCMP + ATP = dCDP + ADP</text>
        <dbReference type="Rhea" id="RHEA:25094"/>
        <dbReference type="ChEBI" id="CHEBI:30616"/>
        <dbReference type="ChEBI" id="CHEBI:57566"/>
        <dbReference type="ChEBI" id="CHEBI:58593"/>
        <dbReference type="ChEBI" id="CHEBI:456216"/>
        <dbReference type="EC" id="2.7.4.25"/>
    </reaction>
</comment>
<comment type="pathway">
    <text evidence="1">Cofactor biosynthesis; (R)-pantothenate biosynthesis; (R)-pantothenate from (R)-pantoate and beta-alanine: step 1/1.</text>
</comment>
<comment type="subcellular location">
    <subcellularLocation>
        <location evidence="1">Cytoplasm</location>
    </subcellularLocation>
</comment>
<comment type="similarity">
    <text evidence="1">In the N-terminal section; belongs to the pantothenate synthetase family.</text>
</comment>
<comment type="similarity">
    <text evidence="1">In the C-terminal section; belongs to the cytidylate kinase family. Type 1 subfamily.</text>
</comment>
<keyword id="KW-0067">ATP-binding</keyword>
<keyword id="KW-0963">Cytoplasm</keyword>
<keyword id="KW-0418">Kinase</keyword>
<keyword id="KW-0436">Ligase</keyword>
<keyword id="KW-0511">Multifunctional enzyme</keyword>
<keyword id="KW-0547">Nucleotide-binding</keyword>
<keyword id="KW-0566">Pantothenate biosynthesis</keyword>
<keyword id="KW-0808">Transferase</keyword>
<sequence>MQWLRTVAALREQVASWRGSTIGLVPTMGSLHEGHLSLIRRCRQECDHTVVSIFVNPLQFGPNEDWDRYPRDEEGDRALCEAAGVDVVFAPDPQEMGADPATAGDRTWVMPPESLLQTLCAPHRPGHFRGVATIVLQLLNLVQPQRAYFGQKDAQQLAIIQRLVQDLQIPTTIVPCPTVREADGLAYSSRNRYLSAVERQVAASLYRALRRGYDHWQAGDPSAEGILAAARAELERTPELRVQYLELVDPQTLQPLSEVKDKGLLAIAAYVGQTRLIDNLLLSPEGVDPLPQEQQSAVPPSPKRGRRPLIAIDGPAGAGKSSVARAVAAQLQLLYLDTGAMYRAITWLALQRGIPLDDAEQLTQLAAQTQLTLQSGPSADEPTRIWADGEEVTQAIRSPEVTRWVSQVAAVPGVRQELVKRQRLIGRDGGAVLEGRDIGTHVFPDAELKVFLTASVGERAQRRQHQLQAQGQVVSLEELKAQIEQRDRRDSERLISPLRPAPDAILIDTDHLSQAEVEDKIVRLYRQLLERSGAAHFDII</sequence>
<reference key="1">
    <citation type="journal article" date="2007" name="ISME J.">
        <title>Population level functional diversity in a microbial community revealed by comparative genomic and metagenomic analyses.</title>
        <authorList>
            <person name="Bhaya D."/>
            <person name="Grossman A.R."/>
            <person name="Steunou A.-S."/>
            <person name="Khuri N."/>
            <person name="Cohan F.M."/>
            <person name="Hamamura N."/>
            <person name="Melendrez M.C."/>
            <person name="Bateson M.M."/>
            <person name="Ward D.M."/>
            <person name="Heidelberg J.F."/>
        </authorList>
    </citation>
    <scope>NUCLEOTIDE SEQUENCE [LARGE SCALE GENOMIC DNA]</scope>
    <source>
        <strain>JA-3-3Ab</strain>
    </source>
</reference>
<dbReference type="EC" id="6.3.2.1" evidence="1"/>
<dbReference type="EC" id="2.7.4.25" evidence="1"/>
<dbReference type="EMBL" id="CP000239">
    <property type="protein sequence ID" value="ABD00775.1"/>
    <property type="molecule type" value="Genomic_DNA"/>
</dbReference>
<dbReference type="RefSeq" id="WP_011431446.1">
    <property type="nucleotide sequence ID" value="NC_007775.1"/>
</dbReference>
<dbReference type="SMR" id="Q2JRH9"/>
<dbReference type="STRING" id="321327.CYA_2663"/>
<dbReference type="KEGG" id="cya:CYA_2663"/>
<dbReference type="eggNOG" id="COG0283">
    <property type="taxonomic scope" value="Bacteria"/>
</dbReference>
<dbReference type="eggNOG" id="COG0414">
    <property type="taxonomic scope" value="Bacteria"/>
</dbReference>
<dbReference type="HOGENOM" id="CLU_037427_0_0_3"/>
<dbReference type="OrthoDB" id="9773087at2"/>
<dbReference type="UniPathway" id="UPA00028">
    <property type="reaction ID" value="UER00005"/>
</dbReference>
<dbReference type="Proteomes" id="UP000008818">
    <property type="component" value="Chromosome"/>
</dbReference>
<dbReference type="GO" id="GO:0005829">
    <property type="term" value="C:cytosol"/>
    <property type="evidence" value="ECO:0007669"/>
    <property type="project" value="TreeGrafter"/>
</dbReference>
<dbReference type="GO" id="GO:0005524">
    <property type="term" value="F:ATP binding"/>
    <property type="evidence" value="ECO:0007669"/>
    <property type="project" value="UniProtKB-UniRule"/>
</dbReference>
<dbReference type="GO" id="GO:0036430">
    <property type="term" value="F:CMP kinase activity"/>
    <property type="evidence" value="ECO:0007669"/>
    <property type="project" value="RHEA"/>
</dbReference>
<dbReference type="GO" id="GO:0036431">
    <property type="term" value="F:dCMP kinase activity"/>
    <property type="evidence" value="ECO:0007669"/>
    <property type="project" value="RHEA"/>
</dbReference>
<dbReference type="GO" id="GO:0004592">
    <property type="term" value="F:pantoate-beta-alanine ligase activity"/>
    <property type="evidence" value="ECO:0007669"/>
    <property type="project" value="UniProtKB-UniRule"/>
</dbReference>
<dbReference type="GO" id="GO:0015949">
    <property type="term" value="P:nucleobase-containing small molecule interconversion"/>
    <property type="evidence" value="ECO:0007669"/>
    <property type="project" value="TreeGrafter"/>
</dbReference>
<dbReference type="GO" id="GO:0015940">
    <property type="term" value="P:pantothenate biosynthetic process"/>
    <property type="evidence" value="ECO:0007669"/>
    <property type="project" value="UniProtKB-UniRule"/>
</dbReference>
<dbReference type="GO" id="GO:0006220">
    <property type="term" value="P:pyrimidine nucleotide metabolic process"/>
    <property type="evidence" value="ECO:0007669"/>
    <property type="project" value="UniProtKB-UniRule"/>
</dbReference>
<dbReference type="CDD" id="cd02020">
    <property type="entry name" value="CMPK"/>
    <property type="match status" value="1"/>
</dbReference>
<dbReference type="CDD" id="cd00560">
    <property type="entry name" value="PanC"/>
    <property type="match status" value="1"/>
</dbReference>
<dbReference type="FunFam" id="3.30.1300.10:FF:000001">
    <property type="entry name" value="Pantothenate synthetase"/>
    <property type="match status" value="1"/>
</dbReference>
<dbReference type="Gene3D" id="3.40.50.620">
    <property type="entry name" value="HUPs"/>
    <property type="match status" value="1"/>
</dbReference>
<dbReference type="Gene3D" id="3.40.50.300">
    <property type="entry name" value="P-loop containing nucleotide triphosphate hydrolases"/>
    <property type="match status" value="1"/>
</dbReference>
<dbReference type="Gene3D" id="3.30.1300.10">
    <property type="entry name" value="Pantoate-beta-alanine ligase, C-terminal domain"/>
    <property type="match status" value="1"/>
</dbReference>
<dbReference type="HAMAP" id="MF_00238">
    <property type="entry name" value="Cytidyl_kinase_type1"/>
    <property type="match status" value="1"/>
</dbReference>
<dbReference type="HAMAP" id="MF_00158">
    <property type="entry name" value="PanC"/>
    <property type="match status" value="1"/>
</dbReference>
<dbReference type="HAMAP" id="MF_01349">
    <property type="entry name" value="PanCY"/>
    <property type="match status" value="1"/>
</dbReference>
<dbReference type="InterPro" id="IPR004821">
    <property type="entry name" value="Cyt_trans-like"/>
</dbReference>
<dbReference type="InterPro" id="IPR003136">
    <property type="entry name" value="Cytidylate_kin"/>
</dbReference>
<dbReference type="InterPro" id="IPR011994">
    <property type="entry name" value="Cytidylate_kinase_dom"/>
</dbReference>
<dbReference type="InterPro" id="IPR027417">
    <property type="entry name" value="P-loop_NTPase"/>
</dbReference>
<dbReference type="InterPro" id="IPR003721">
    <property type="entry name" value="Pantoate_ligase"/>
</dbReference>
<dbReference type="InterPro" id="IPR024894">
    <property type="entry name" value="Pantoate_ligase/cytidylate_kin"/>
</dbReference>
<dbReference type="InterPro" id="IPR042176">
    <property type="entry name" value="Pantoate_ligase_C"/>
</dbReference>
<dbReference type="InterPro" id="IPR014729">
    <property type="entry name" value="Rossmann-like_a/b/a_fold"/>
</dbReference>
<dbReference type="NCBIfam" id="TIGR00017">
    <property type="entry name" value="cmk"/>
    <property type="match status" value="1"/>
</dbReference>
<dbReference type="NCBIfam" id="TIGR00125">
    <property type="entry name" value="cyt_tran_rel"/>
    <property type="match status" value="1"/>
</dbReference>
<dbReference type="NCBIfam" id="TIGR00018">
    <property type="entry name" value="panC"/>
    <property type="match status" value="1"/>
</dbReference>
<dbReference type="NCBIfam" id="NF010004">
    <property type="entry name" value="PRK13477.1"/>
    <property type="match status" value="1"/>
</dbReference>
<dbReference type="PANTHER" id="PTHR21299:SF2">
    <property type="entry name" value="CYTIDYLATE KINASE"/>
    <property type="match status" value="1"/>
</dbReference>
<dbReference type="PANTHER" id="PTHR21299">
    <property type="entry name" value="CYTIDYLATE KINASE/PANTOATE-BETA-ALANINE LIGASE"/>
    <property type="match status" value="1"/>
</dbReference>
<dbReference type="Pfam" id="PF02224">
    <property type="entry name" value="Cytidylate_kin"/>
    <property type="match status" value="1"/>
</dbReference>
<dbReference type="Pfam" id="PF02569">
    <property type="entry name" value="Pantoate_ligase"/>
    <property type="match status" value="1"/>
</dbReference>
<dbReference type="SUPFAM" id="SSF52374">
    <property type="entry name" value="Nucleotidylyl transferase"/>
    <property type="match status" value="1"/>
</dbReference>
<dbReference type="SUPFAM" id="SSF52540">
    <property type="entry name" value="P-loop containing nucleoside triphosphate hydrolases"/>
    <property type="match status" value="1"/>
</dbReference>